<sequence>MGMSSLTRAELGALGEEVAVEHLAALGLKTLARNWRCRYGELDIIAEDAATGTVVFVEVKTRSGDGFGGLAEAVTPQKVRRIRRLAAIWLAAQDAHWAVLRIDVIGVRVGRSRDPEIVHLAGVG</sequence>
<feature type="chain" id="PRO_0000336206" description="UPF0102 protein MSMEG_2508/MSMEI_2448">
    <location>
        <begin position="1"/>
        <end position="124"/>
    </location>
</feature>
<protein>
    <recommendedName>
        <fullName evidence="1">UPF0102 protein MSMEG_2508/MSMEI_2448</fullName>
    </recommendedName>
</protein>
<evidence type="ECO:0000255" key="1">
    <source>
        <dbReference type="HAMAP-Rule" id="MF_00048"/>
    </source>
</evidence>
<evidence type="ECO:0000305" key="2"/>
<proteinExistence type="inferred from homology"/>
<dbReference type="EMBL" id="CP000480">
    <property type="protein sequence ID" value="ABK71719.1"/>
    <property type="molecule type" value="Genomic_DNA"/>
</dbReference>
<dbReference type="EMBL" id="CP001663">
    <property type="protein sequence ID" value="AFP38916.1"/>
    <property type="status" value="ALT_INIT"/>
    <property type="molecule type" value="Genomic_DNA"/>
</dbReference>
<dbReference type="RefSeq" id="YP_886847.1">
    <property type="nucleotide sequence ID" value="NC_008596.1"/>
</dbReference>
<dbReference type="SMR" id="A0QVA9"/>
<dbReference type="STRING" id="246196.MSMEG_2508"/>
<dbReference type="PaxDb" id="246196-MSMEI_2448"/>
<dbReference type="KEGG" id="msg:MSMEI_2448"/>
<dbReference type="KEGG" id="msm:MSMEG_2508"/>
<dbReference type="PATRIC" id="fig|246196.19.peg.2473"/>
<dbReference type="eggNOG" id="COG0792">
    <property type="taxonomic scope" value="Bacteria"/>
</dbReference>
<dbReference type="OrthoDB" id="9794876at2"/>
<dbReference type="Proteomes" id="UP000000757">
    <property type="component" value="Chromosome"/>
</dbReference>
<dbReference type="Proteomes" id="UP000006158">
    <property type="component" value="Chromosome"/>
</dbReference>
<dbReference type="GO" id="GO:0003676">
    <property type="term" value="F:nucleic acid binding"/>
    <property type="evidence" value="ECO:0007669"/>
    <property type="project" value="InterPro"/>
</dbReference>
<dbReference type="CDD" id="cd20736">
    <property type="entry name" value="PoNe_Nuclease"/>
    <property type="match status" value="1"/>
</dbReference>
<dbReference type="Gene3D" id="3.40.1350.10">
    <property type="match status" value="1"/>
</dbReference>
<dbReference type="HAMAP" id="MF_00048">
    <property type="entry name" value="UPF0102"/>
    <property type="match status" value="1"/>
</dbReference>
<dbReference type="InterPro" id="IPR011335">
    <property type="entry name" value="Restrct_endonuc-II-like"/>
</dbReference>
<dbReference type="InterPro" id="IPR011856">
    <property type="entry name" value="tRNA_endonuc-like_dom_sf"/>
</dbReference>
<dbReference type="InterPro" id="IPR003509">
    <property type="entry name" value="UPF0102_YraN-like"/>
</dbReference>
<dbReference type="NCBIfam" id="NF009150">
    <property type="entry name" value="PRK12497.1-3"/>
    <property type="match status" value="1"/>
</dbReference>
<dbReference type="NCBIfam" id="NF009153">
    <property type="entry name" value="PRK12497.3-1"/>
    <property type="match status" value="1"/>
</dbReference>
<dbReference type="NCBIfam" id="NF009154">
    <property type="entry name" value="PRK12497.3-3"/>
    <property type="match status" value="1"/>
</dbReference>
<dbReference type="NCBIfam" id="TIGR00252">
    <property type="entry name" value="YraN family protein"/>
    <property type="match status" value="1"/>
</dbReference>
<dbReference type="PANTHER" id="PTHR34039">
    <property type="entry name" value="UPF0102 PROTEIN YRAN"/>
    <property type="match status" value="1"/>
</dbReference>
<dbReference type="PANTHER" id="PTHR34039:SF1">
    <property type="entry name" value="UPF0102 PROTEIN YRAN"/>
    <property type="match status" value="1"/>
</dbReference>
<dbReference type="Pfam" id="PF02021">
    <property type="entry name" value="UPF0102"/>
    <property type="match status" value="1"/>
</dbReference>
<dbReference type="SUPFAM" id="SSF52980">
    <property type="entry name" value="Restriction endonuclease-like"/>
    <property type="match status" value="1"/>
</dbReference>
<organism>
    <name type="scientific">Mycolicibacterium smegmatis (strain ATCC 700084 / mc(2)155)</name>
    <name type="common">Mycobacterium smegmatis</name>
    <dbReference type="NCBI Taxonomy" id="246196"/>
    <lineage>
        <taxon>Bacteria</taxon>
        <taxon>Bacillati</taxon>
        <taxon>Actinomycetota</taxon>
        <taxon>Actinomycetes</taxon>
        <taxon>Mycobacteriales</taxon>
        <taxon>Mycobacteriaceae</taxon>
        <taxon>Mycolicibacterium</taxon>
    </lineage>
</organism>
<keyword id="KW-1185">Reference proteome</keyword>
<comment type="similarity">
    <text evidence="1">Belongs to the UPF0102 family.</text>
</comment>
<comment type="sequence caution" evidence="2">
    <conflict type="erroneous initiation">
        <sequence resource="EMBL-CDS" id="AFP38916"/>
    </conflict>
    <text>Truncated N-terminus.</text>
</comment>
<name>Y2508_MYCS2</name>
<gene>
    <name type="ordered locus">MSMEG_2508</name>
    <name type="ordered locus">MSMEI_2448</name>
</gene>
<reference key="1">
    <citation type="submission" date="2006-10" db="EMBL/GenBank/DDBJ databases">
        <authorList>
            <person name="Fleischmann R.D."/>
            <person name="Dodson R.J."/>
            <person name="Haft D.H."/>
            <person name="Merkel J.S."/>
            <person name="Nelson W.C."/>
            <person name="Fraser C.M."/>
        </authorList>
    </citation>
    <scope>NUCLEOTIDE SEQUENCE [LARGE SCALE GENOMIC DNA]</scope>
    <source>
        <strain>ATCC 700084 / mc(2)155</strain>
    </source>
</reference>
<reference key="2">
    <citation type="journal article" date="2007" name="Genome Biol.">
        <title>Interrupted coding sequences in Mycobacterium smegmatis: authentic mutations or sequencing errors?</title>
        <authorList>
            <person name="Deshayes C."/>
            <person name="Perrodou E."/>
            <person name="Gallien S."/>
            <person name="Euphrasie D."/>
            <person name="Schaeffer C."/>
            <person name="Van-Dorsselaer A."/>
            <person name="Poch O."/>
            <person name="Lecompte O."/>
            <person name="Reyrat J.-M."/>
        </authorList>
    </citation>
    <scope>NUCLEOTIDE SEQUENCE [LARGE SCALE GENOMIC DNA]</scope>
    <source>
        <strain>ATCC 700084 / mc(2)155</strain>
    </source>
</reference>
<reference key="3">
    <citation type="journal article" date="2009" name="Genome Res.">
        <title>Ortho-proteogenomics: multiple proteomes investigation through orthology and a new MS-based protocol.</title>
        <authorList>
            <person name="Gallien S."/>
            <person name="Perrodou E."/>
            <person name="Carapito C."/>
            <person name="Deshayes C."/>
            <person name="Reyrat J.-M."/>
            <person name="Van Dorsselaer A."/>
            <person name="Poch O."/>
            <person name="Schaeffer C."/>
            <person name="Lecompte O."/>
        </authorList>
    </citation>
    <scope>NUCLEOTIDE SEQUENCE [LARGE SCALE GENOMIC DNA]</scope>
    <source>
        <strain>ATCC 700084 / mc(2)155</strain>
    </source>
</reference>
<accession>A0QVA9</accession>
<accession>I7G6S0</accession>